<name>WNT2_CARPS</name>
<reference key="1">
    <citation type="submission" date="2005-11" db="EMBL/GenBank/DDBJ databases">
        <title>NISC comparative sequencing initiative.</title>
        <authorList>
            <person name="Antonellis A."/>
            <person name="Ayele K."/>
            <person name="Benjamin B."/>
            <person name="Blakesley R.W."/>
            <person name="Boakye A."/>
            <person name="Bouffard G.G."/>
            <person name="Brinkley C."/>
            <person name="Brooks S."/>
            <person name="Chu G."/>
            <person name="Coleman H."/>
            <person name="Engle J."/>
            <person name="Gestole M."/>
            <person name="Greene A."/>
            <person name="Guan X."/>
            <person name="Gupta J."/>
            <person name="Haghighi P."/>
            <person name="Han J."/>
            <person name="Hansen N."/>
            <person name="Ho S.-L."/>
            <person name="Hu P."/>
            <person name="Hunter G."/>
            <person name="Hurle B."/>
            <person name="Idol J.R."/>
            <person name="Kwong P."/>
            <person name="Laric P."/>
            <person name="Larson S."/>
            <person name="Lee-Lin S.-Q."/>
            <person name="Legaspi R."/>
            <person name="Madden M."/>
            <person name="Maduro Q.L."/>
            <person name="Maduro V.B."/>
            <person name="Margulies E.H."/>
            <person name="Masiello C."/>
            <person name="Maskeri B."/>
            <person name="McDowell J."/>
            <person name="Mojidi H.A."/>
            <person name="Mullikin J.C."/>
            <person name="Oestreicher J.S."/>
            <person name="Park M."/>
            <person name="Portnoy M.E."/>
            <person name="Prasad A."/>
            <person name="Puri O."/>
            <person name="Reddix-Dugue N."/>
            <person name="Schandler K."/>
            <person name="Schueler M.G."/>
            <person name="Sison C."/>
            <person name="Stantripop S."/>
            <person name="Stephen E."/>
            <person name="Taye A."/>
            <person name="Thomas J.W."/>
            <person name="Thomas P.J."/>
            <person name="Tsipouri V."/>
            <person name="Ung L."/>
            <person name="Vogt J.L."/>
            <person name="Wetherby K.D."/>
            <person name="Young A."/>
            <person name="Green E.D."/>
        </authorList>
    </citation>
    <scope>NUCLEOTIDE SEQUENCE [LARGE SCALE GENOMIC DNA]</scope>
</reference>
<sequence>MNAPLGGIWLWLPLLLTWLSPEVSSSWWYMRATGGSSRVMCDNVPGLVSRQRQLCHRNPDVMRAIGLGVAEWTAECQHQFRQHRWNCNTLDRDHSLFGRVLLRSSRESAFVYAISSAGVVFAITRACSQGELKSCSCDPKKKGSSRDNKGTFDWGGCSDNIDYGIKFARAFVDAKERQGKDARALMNLHNNRAGRKAVKRFLKQECKCHGVSGSCTLRTCWLAMADFRKTGDYLWKKYSGAIQVVMNQDGTGFTVANKRFKKPTKNDLVYFENSPDYCIRDRDAGSLGTAGRVCNLTSRGMDSCEVMCCGRGYDTSRVTRMTKCECKFHWCCAVRCQDCLEALDVHTCKAPKSADWAAPT</sequence>
<organism>
    <name type="scientific">Carollia perspicillata</name>
    <name type="common">Seba's short-tailed bat</name>
    <dbReference type="NCBI Taxonomy" id="40233"/>
    <lineage>
        <taxon>Eukaryota</taxon>
        <taxon>Metazoa</taxon>
        <taxon>Chordata</taxon>
        <taxon>Craniata</taxon>
        <taxon>Vertebrata</taxon>
        <taxon>Euteleostomi</taxon>
        <taxon>Mammalia</taxon>
        <taxon>Eutheria</taxon>
        <taxon>Laurasiatheria</taxon>
        <taxon>Chiroptera</taxon>
        <taxon>Yangochiroptera</taxon>
        <taxon>Phyllostomidae</taxon>
        <taxon>Carolliinae</taxon>
        <taxon>Carollia</taxon>
    </lineage>
</organism>
<keyword id="KW-0217">Developmental protein</keyword>
<keyword id="KW-1015">Disulfide bond</keyword>
<keyword id="KW-0272">Extracellular matrix</keyword>
<keyword id="KW-0325">Glycoprotein</keyword>
<keyword id="KW-0449">Lipoprotein</keyword>
<keyword id="KW-0964">Secreted</keyword>
<keyword id="KW-0732">Signal</keyword>
<keyword id="KW-0879">Wnt signaling pathway</keyword>
<accession>Q2QLC7</accession>
<comment type="function">
    <text evidence="1">Ligand for members of the frizzled family of seven transmembrane receptors. Probable developmental protein. May be a signaling molecule which affects the development of discrete regions of tissues. Is likely to signal over only few cell diameters (By similarity).</text>
</comment>
<comment type="subcellular location">
    <subcellularLocation>
        <location evidence="1">Secreted</location>
        <location evidence="1">Extracellular space</location>
        <location evidence="1">Extracellular matrix</location>
    </subcellularLocation>
</comment>
<comment type="PTM">
    <text evidence="2 4">Palmitoleoylation is required for efficient binding to frizzled receptors. Depalmitoleoylation leads to Wnt signaling pathway inhibition.</text>
</comment>
<comment type="similarity">
    <text evidence="6">Belongs to the Wnt family.</text>
</comment>
<dbReference type="EMBL" id="DP000018">
    <property type="protein sequence ID" value="ABB89782.1"/>
    <property type="molecule type" value="Genomic_DNA"/>
</dbReference>
<dbReference type="SMR" id="Q2QLC7"/>
<dbReference type="GlyCosmos" id="Q2QLC7">
    <property type="glycosylation" value="1 site, No reported glycans"/>
</dbReference>
<dbReference type="GO" id="GO:0005615">
    <property type="term" value="C:extracellular space"/>
    <property type="evidence" value="ECO:0007669"/>
    <property type="project" value="TreeGrafter"/>
</dbReference>
<dbReference type="GO" id="GO:0005125">
    <property type="term" value="F:cytokine activity"/>
    <property type="evidence" value="ECO:0007669"/>
    <property type="project" value="TreeGrafter"/>
</dbReference>
<dbReference type="GO" id="GO:0005109">
    <property type="term" value="F:frizzled binding"/>
    <property type="evidence" value="ECO:0007669"/>
    <property type="project" value="TreeGrafter"/>
</dbReference>
<dbReference type="GO" id="GO:0048513">
    <property type="term" value="P:animal organ development"/>
    <property type="evidence" value="ECO:0007669"/>
    <property type="project" value="UniProtKB-ARBA"/>
</dbReference>
<dbReference type="GO" id="GO:0060070">
    <property type="term" value="P:canonical Wnt signaling pathway"/>
    <property type="evidence" value="ECO:0007669"/>
    <property type="project" value="TreeGrafter"/>
</dbReference>
<dbReference type="GO" id="GO:0045165">
    <property type="term" value="P:cell fate commitment"/>
    <property type="evidence" value="ECO:0007669"/>
    <property type="project" value="TreeGrafter"/>
</dbReference>
<dbReference type="GO" id="GO:0030182">
    <property type="term" value="P:neuron differentiation"/>
    <property type="evidence" value="ECO:0007669"/>
    <property type="project" value="TreeGrafter"/>
</dbReference>
<dbReference type="CDD" id="cd19345">
    <property type="entry name" value="Wnt_Wnt2"/>
    <property type="match status" value="1"/>
</dbReference>
<dbReference type="FunFam" id="3.30.2460.20:FF:000001">
    <property type="entry name" value="Wnt homolog"/>
    <property type="match status" value="1"/>
</dbReference>
<dbReference type="Gene3D" id="3.30.2460.20">
    <property type="match status" value="1"/>
</dbReference>
<dbReference type="InterPro" id="IPR005817">
    <property type="entry name" value="Wnt"/>
</dbReference>
<dbReference type="InterPro" id="IPR009140">
    <property type="entry name" value="Wnt2"/>
</dbReference>
<dbReference type="InterPro" id="IPR043158">
    <property type="entry name" value="Wnt_C"/>
</dbReference>
<dbReference type="InterPro" id="IPR018161">
    <property type="entry name" value="Wnt_CS"/>
</dbReference>
<dbReference type="PANTHER" id="PTHR12027:SF86">
    <property type="entry name" value="PROTEIN WNT-2"/>
    <property type="match status" value="1"/>
</dbReference>
<dbReference type="PANTHER" id="PTHR12027">
    <property type="entry name" value="WNT RELATED"/>
    <property type="match status" value="1"/>
</dbReference>
<dbReference type="Pfam" id="PF00110">
    <property type="entry name" value="wnt"/>
    <property type="match status" value="1"/>
</dbReference>
<dbReference type="PRINTS" id="PR01842">
    <property type="entry name" value="WNT2PROTEIN"/>
</dbReference>
<dbReference type="PRINTS" id="PR01349">
    <property type="entry name" value="WNTPROTEIN"/>
</dbReference>
<dbReference type="SMART" id="SM00097">
    <property type="entry name" value="WNT1"/>
    <property type="match status" value="1"/>
</dbReference>
<dbReference type="PROSITE" id="PS00246">
    <property type="entry name" value="WNT1"/>
    <property type="match status" value="1"/>
</dbReference>
<evidence type="ECO:0000250" key="1"/>
<evidence type="ECO:0000250" key="2">
    <source>
        <dbReference type="UniProtKB" id="P27467"/>
    </source>
</evidence>
<evidence type="ECO:0000250" key="3">
    <source>
        <dbReference type="UniProtKB" id="P28026"/>
    </source>
</evidence>
<evidence type="ECO:0000250" key="4">
    <source>
        <dbReference type="UniProtKB" id="P56704"/>
    </source>
</evidence>
<evidence type="ECO:0000255" key="5"/>
<evidence type="ECO:0000305" key="6"/>
<proteinExistence type="inferred from homology"/>
<gene>
    <name type="primary">WNT2</name>
</gene>
<protein>
    <recommendedName>
        <fullName>Protein Wnt-2</fullName>
    </recommendedName>
</protein>
<feature type="signal peptide" evidence="5">
    <location>
        <begin position="1"/>
        <end position="25"/>
    </location>
</feature>
<feature type="chain" id="PRO_0000226062" description="Protein Wnt-2">
    <location>
        <begin position="26"/>
        <end position="360"/>
    </location>
</feature>
<feature type="lipid moiety-binding region" description="O-palmitoleoyl serine; by PORCN" evidence="4">
    <location>
        <position position="212"/>
    </location>
</feature>
<feature type="glycosylation site" description="N-linked (GlcNAc...) asparagine" evidence="5">
    <location>
        <position position="295"/>
    </location>
</feature>
<feature type="disulfide bond" evidence="3">
    <location>
        <begin position="76"/>
        <end position="87"/>
    </location>
</feature>
<feature type="disulfide bond" evidence="3">
    <location>
        <begin position="127"/>
        <end position="135"/>
    </location>
</feature>
<feature type="disulfide bond" evidence="3">
    <location>
        <begin position="137"/>
        <end position="157"/>
    </location>
</feature>
<feature type="disulfide bond" evidence="3">
    <location>
        <begin position="206"/>
        <end position="220"/>
    </location>
</feature>
<feature type="disulfide bond" evidence="3">
    <location>
        <begin position="208"/>
        <end position="215"/>
    </location>
</feature>
<feature type="disulfide bond" evidence="3">
    <location>
        <begin position="278"/>
        <end position="309"/>
    </location>
</feature>
<feature type="disulfide bond" evidence="3">
    <location>
        <begin position="294"/>
        <end position="304"/>
    </location>
</feature>
<feature type="disulfide bond" evidence="3">
    <location>
        <begin position="308"/>
        <end position="348"/>
    </location>
</feature>
<feature type="disulfide bond" evidence="3">
    <location>
        <begin position="324"/>
        <end position="339"/>
    </location>
</feature>
<feature type="disulfide bond" evidence="3">
    <location>
        <begin position="326"/>
        <end position="336"/>
    </location>
</feature>
<feature type="disulfide bond" evidence="3">
    <location>
        <begin position="331"/>
        <end position="332"/>
    </location>
</feature>